<name>APT_METC4</name>
<accession>B7KY35</accession>
<organism>
    <name type="scientific">Methylorubrum extorquens (strain CM4 / NCIMB 13688)</name>
    <name type="common">Methylobacterium extorquens</name>
    <dbReference type="NCBI Taxonomy" id="440085"/>
    <lineage>
        <taxon>Bacteria</taxon>
        <taxon>Pseudomonadati</taxon>
        <taxon>Pseudomonadota</taxon>
        <taxon>Alphaproteobacteria</taxon>
        <taxon>Hyphomicrobiales</taxon>
        <taxon>Methylobacteriaceae</taxon>
        <taxon>Methylorubrum</taxon>
    </lineage>
</organism>
<gene>
    <name evidence="1" type="primary">apt</name>
    <name type="ordered locus">Mchl_0611</name>
</gene>
<comment type="function">
    <text evidence="1">Catalyzes a salvage reaction resulting in the formation of AMP, that is energically less costly than de novo synthesis.</text>
</comment>
<comment type="catalytic activity">
    <reaction evidence="1">
        <text>AMP + diphosphate = 5-phospho-alpha-D-ribose 1-diphosphate + adenine</text>
        <dbReference type="Rhea" id="RHEA:16609"/>
        <dbReference type="ChEBI" id="CHEBI:16708"/>
        <dbReference type="ChEBI" id="CHEBI:33019"/>
        <dbReference type="ChEBI" id="CHEBI:58017"/>
        <dbReference type="ChEBI" id="CHEBI:456215"/>
        <dbReference type="EC" id="2.4.2.7"/>
    </reaction>
</comment>
<comment type="pathway">
    <text evidence="1">Purine metabolism; AMP biosynthesis via salvage pathway; AMP from adenine: step 1/1.</text>
</comment>
<comment type="subunit">
    <text evidence="1">Homodimer.</text>
</comment>
<comment type="subcellular location">
    <subcellularLocation>
        <location evidence="1">Cytoplasm</location>
    </subcellularLocation>
</comment>
<comment type="similarity">
    <text evidence="1">Belongs to the purine/pyrimidine phosphoribosyltransferase family.</text>
</comment>
<keyword id="KW-0963">Cytoplasm</keyword>
<keyword id="KW-0328">Glycosyltransferase</keyword>
<keyword id="KW-0660">Purine salvage</keyword>
<keyword id="KW-0808">Transferase</keyword>
<feature type="chain" id="PRO_1000116249" description="Adenine phosphoribosyltransferase">
    <location>
        <begin position="1"/>
        <end position="181"/>
    </location>
</feature>
<sequence length="181" mass="19520">MEARRHSALKDSVRSIPDYPKPGIIFRDITTLLSDPRSFRRAVDSLVHPYAGGRIDQVAGIEARGFILGGAVAHQLSSGFVPIRKKGKLPHKTVSTAYALEYGTDEIEIHVDAIKPGDRVILVDDLIATGGTATAAVNLLRQLGAEVVAACFVIDLPEIGGAQRLRDLGVTVRTLMEFEGH</sequence>
<dbReference type="EC" id="2.4.2.7" evidence="1"/>
<dbReference type="EMBL" id="CP001298">
    <property type="protein sequence ID" value="ACK81533.1"/>
    <property type="molecule type" value="Genomic_DNA"/>
</dbReference>
<dbReference type="RefSeq" id="WP_003604529.1">
    <property type="nucleotide sequence ID" value="NC_011757.1"/>
</dbReference>
<dbReference type="SMR" id="B7KY35"/>
<dbReference type="KEGG" id="mch:Mchl_0611"/>
<dbReference type="HOGENOM" id="CLU_063339_3_0_5"/>
<dbReference type="UniPathway" id="UPA00588">
    <property type="reaction ID" value="UER00646"/>
</dbReference>
<dbReference type="Proteomes" id="UP000002385">
    <property type="component" value="Chromosome"/>
</dbReference>
<dbReference type="GO" id="GO:0005737">
    <property type="term" value="C:cytoplasm"/>
    <property type="evidence" value="ECO:0007669"/>
    <property type="project" value="UniProtKB-SubCell"/>
</dbReference>
<dbReference type="GO" id="GO:0002055">
    <property type="term" value="F:adenine binding"/>
    <property type="evidence" value="ECO:0007669"/>
    <property type="project" value="TreeGrafter"/>
</dbReference>
<dbReference type="GO" id="GO:0003999">
    <property type="term" value="F:adenine phosphoribosyltransferase activity"/>
    <property type="evidence" value="ECO:0007669"/>
    <property type="project" value="UniProtKB-UniRule"/>
</dbReference>
<dbReference type="GO" id="GO:0016208">
    <property type="term" value="F:AMP binding"/>
    <property type="evidence" value="ECO:0007669"/>
    <property type="project" value="TreeGrafter"/>
</dbReference>
<dbReference type="GO" id="GO:0006168">
    <property type="term" value="P:adenine salvage"/>
    <property type="evidence" value="ECO:0007669"/>
    <property type="project" value="InterPro"/>
</dbReference>
<dbReference type="GO" id="GO:0044209">
    <property type="term" value="P:AMP salvage"/>
    <property type="evidence" value="ECO:0007669"/>
    <property type="project" value="UniProtKB-UniRule"/>
</dbReference>
<dbReference type="GO" id="GO:0006166">
    <property type="term" value="P:purine ribonucleoside salvage"/>
    <property type="evidence" value="ECO:0007669"/>
    <property type="project" value="UniProtKB-KW"/>
</dbReference>
<dbReference type="CDD" id="cd06223">
    <property type="entry name" value="PRTases_typeI"/>
    <property type="match status" value="1"/>
</dbReference>
<dbReference type="FunFam" id="3.40.50.2020:FF:000021">
    <property type="entry name" value="Adenine phosphoribosyltransferase"/>
    <property type="match status" value="1"/>
</dbReference>
<dbReference type="Gene3D" id="3.40.50.2020">
    <property type="match status" value="1"/>
</dbReference>
<dbReference type="HAMAP" id="MF_00004">
    <property type="entry name" value="Aden_phosphoribosyltr"/>
    <property type="match status" value="1"/>
</dbReference>
<dbReference type="InterPro" id="IPR005764">
    <property type="entry name" value="Ade_phspho_trans"/>
</dbReference>
<dbReference type="InterPro" id="IPR000836">
    <property type="entry name" value="PRibTrfase_dom"/>
</dbReference>
<dbReference type="InterPro" id="IPR029057">
    <property type="entry name" value="PRTase-like"/>
</dbReference>
<dbReference type="InterPro" id="IPR050054">
    <property type="entry name" value="UPRTase/APRTase"/>
</dbReference>
<dbReference type="NCBIfam" id="TIGR01090">
    <property type="entry name" value="apt"/>
    <property type="match status" value="1"/>
</dbReference>
<dbReference type="NCBIfam" id="NF002634">
    <property type="entry name" value="PRK02304.1-3"/>
    <property type="match status" value="1"/>
</dbReference>
<dbReference type="NCBIfam" id="NF002636">
    <property type="entry name" value="PRK02304.1-5"/>
    <property type="match status" value="1"/>
</dbReference>
<dbReference type="PANTHER" id="PTHR32315">
    <property type="entry name" value="ADENINE PHOSPHORIBOSYLTRANSFERASE"/>
    <property type="match status" value="1"/>
</dbReference>
<dbReference type="PANTHER" id="PTHR32315:SF3">
    <property type="entry name" value="ADENINE PHOSPHORIBOSYLTRANSFERASE"/>
    <property type="match status" value="1"/>
</dbReference>
<dbReference type="Pfam" id="PF00156">
    <property type="entry name" value="Pribosyltran"/>
    <property type="match status" value="1"/>
</dbReference>
<dbReference type="SUPFAM" id="SSF53271">
    <property type="entry name" value="PRTase-like"/>
    <property type="match status" value="1"/>
</dbReference>
<dbReference type="PROSITE" id="PS00103">
    <property type="entry name" value="PUR_PYR_PR_TRANSFER"/>
    <property type="match status" value="1"/>
</dbReference>
<protein>
    <recommendedName>
        <fullName evidence="1">Adenine phosphoribosyltransferase</fullName>
        <shortName evidence="1">APRT</shortName>
        <ecNumber evidence="1">2.4.2.7</ecNumber>
    </recommendedName>
</protein>
<proteinExistence type="inferred from homology"/>
<evidence type="ECO:0000255" key="1">
    <source>
        <dbReference type="HAMAP-Rule" id="MF_00004"/>
    </source>
</evidence>
<reference key="1">
    <citation type="submission" date="2008-12" db="EMBL/GenBank/DDBJ databases">
        <title>Complete sequence of chromosome of Methylobacterium chloromethanicum CM4.</title>
        <authorList>
            <consortium name="US DOE Joint Genome Institute"/>
            <person name="Lucas S."/>
            <person name="Copeland A."/>
            <person name="Lapidus A."/>
            <person name="Glavina del Rio T."/>
            <person name="Dalin E."/>
            <person name="Tice H."/>
            <person name="Bruce D."/>
            <person name="Goodwin L."/>
            <person name="Pitluck S."/>
            <person name="Chertkov O."/>
            <person name="Brettin T."/>
            <person name="Detter J.C."/>
            <person name="Han C."/>
            <person name="Larimer F."/>
            <person name="Land M."/>
            <person name="Hauser L."/>
            <person name="Kyrpides N."/>
            <person name="Mikhailova N."/>
            <person name="Marx C."/>
            <person name="Richardson P."/>
        </authorList>
    </citation>
    <scope>NUCLEOTIDE SEQUENCE [LARGE SCALE GENOMIC DNA]</scope>
    <source>
        <strain>CM4 / NCIMB 13688</strain>
    </source>
</reference>